<keyword id="KW-0460">Magnesium</keyword>
<keyword id="KW-0464">Manganese</keyword>
<keyword id="KW-0474">Menaquinone biosynthesis</keyword>
<keyword id="KW-0479">Metal-binding</keyword>
<keyword id="KW-0786">Thiamine pyrophosphate</keyword>
<keyword id="KW-0808">Transferase</keyword>
<evidence type="ECO:0000255" key="1">
    <source>
        <dbReference type="HAMAP-Rule" id="MF_01659"/>
    </source>
</evidence>
<feature type="chain" id="PRO_1000187058" description="2-succinyl-5-enolpyruvyl-6-hydroxy-3-cyclohexene-1-carboxylate synthase">
    <location>
        <begin position="1"/>
        <end position="568"/>
    </location>
</feature>
<protein>
    <recommendedName>
        <fullName evidence="1">2-succinyl-5-enolpyruvyl-6-hydroxy-3-cyclohexene-1-carboxylate synthase</fullName>
        <shortName evidence="1">SEPHCHC synthase</shortName>
        <ecNumber evidence="1">2.2.1.9</ecNumber>
    </recommendedName>
    <alternativeName>
        <fullName evidence="1">Menaquinone biosynthesis protein MenD</fullName>
    </alternativeName>
</protein>
<accession>B3GZ01</accession>
<name>MEND_ACTP7</name>
<gene>
    <name evidence="1" type="primary">menD</name>
    <name type="ordered locus">APP7_1835</name>
</gene>
<dbReference type="EC" id="2.2.1.9" evidence="1"/>
<dbReference type="EMBL" id="CP001091">
    <property type="protein sequence ID" value="ACE62487.1"/>
    <property type="molecule type" value="Genomic_DNA"/>
</dbReference>
<dbReference type="RefSeq" id="WP_005618250.1">
    <property type="nucleotide sequence ID" value="NC_010939.1"/>
</dbReference>
<dbReference type="SMR" id="B3GZ01"/>
<dbReference type="KEGG" id="apa:APP7_1835"/>
<dbReference type="HOGENOM" id="CLU_006051_3_0_6"/>
<dbReference type="UniPathway" id="UPA00079"/>
<dbReference type="UniPathway" id="UPA01057">
    <property type="reaction ID" value="UER00164"/>
</dbReference>
<dbReference type="Proteomes" id="UP000001226">
    <property type="component" value="Chromosome"/>
</dbReference>
<dbReference type="GO" id="GO:0070204">
    <property type="term" value="F:2-succinyl-5-enolpyruvyl-6-hydroxy-3-cyclohexene-1-carboxylic-acid synthase activity"/>
    <property type="evidence" value="ECO:0007669"/>
    <property type="project" value="UniProtKB-UniRule"/>
</dbReference>
<dbReference type="GO" id="GO:0000287">
    <property type="term" value="F:magnesium ion binding"/>
    <property type="evidence" value="ECO:0007669"/>
    <property type="project" value="UniProtKB-UniRule"/>
</dbReference>
<dbReference type="GO" id="GO:0030145">
    <property type="term" value="F:manganese ion binding"/>
    <property type="evidence" value="ECO:0007669"/>
    <property type="project" value="UniProtKB-UniRule"/>
</dbReference>
<dbReference type="GO" id="GO:0030976">
    <property type="term" value="F:thiamine pyrophosphate binding"/>
    <property type="evidence" value="ECO:0007669"/>
    <property type="project" value="UniProtKB-UniRule"/>
</dbReference>
<dbReference type="GO" id="GO:0009234">
    <property type="term" value="P:menaquinone biosynthetic process"/>
    <property type="evidence" value="ECO:0007669"/>
    <property type="project" value="UniProtKB-UniRule"/>
</dbReference>
<dbReference type="CDD" id="cd07037">
    <property type="entry name" value="TPP_PYR_MenD"/>
    <property type="match status" value="1"/>
</dbReference>
<dbReference type="CDD" id="cd02009">
    <property type="entry name" value="TPP_SHCHC_synthase"/>
    <property type="match status" value="1"/>
</dbReference>
<dbReference type="Gene3D" id="3.40.50.970">
    <property type="match status" value="2"/>
</dbReference>
<dbReference type="Gene3D" id="3.40.50.1220">
    <property type="entry name" value="TPP-binding domain"/>
    <property type="match status" value="1"/>
</dbReference>
<dbReference type="HAMAP" id="MF_01659">
    <property type="entry name" value="MenD"/>
    <property type="match status" value="1"/>
</dbReference>
<dbReference type="InterPro" id="IPR004433">
    <property type="entry name" value="MenaQ_synth_MenD"/>
</dbReference>
<dbReference type="InterPro" id="IPR032264">
    <property type="entry name" value="MenD_middle"/>
</dbReference>
<dbReference type="InterPro" id="IPR029061">
    <property type="entry name" value="THDP-binding"/>
</dbReference>
<dbReference type="InterPro" id="IPR012001">
    <property type="entry name" value="Thiamin_PyroP_enz_TPP-bd_dom"/>
</dbReference>
<dbReference type="InterPro" id="IPR011766">
    <property type="entry name" value="TPP_enzyme_TPP-bd"/>
</dbReference>
<dbReference type="NCBIfam" id="TIGR00173">
    <property type="entry name" value="menD"/>
    <property type="match status" value="1"/>
</dbReference>
<dbReference type="PANTHER" id="PTHR42916">
    <property type="entry name" value="2-SUCCINYL-5-ENOLPYRUVYL-6-HYDROXY-3-CYCLOHEXENE-1-CARBOXYLATE SYNTHASE"/>
    <property type="match status" value="1"/>
</dbReference>
<dbReference type="PANTHER" id="PTHR42916:SF1">
    <property type="entry name" value="PROTEIN PHYLLO, CHLOROPLASTIC"/>
    <property type="match status" value="1"/>
</dbReference>
<dbReference type="Pfam" id="PF02775">
    <property type="entry name" value="TPP_enzyme_C"/>
    <property type="match status" value="1"/>
</dbReference>
<dbReference type="Pfam" id="PF16582">
    <property type="entry name" value="TPP_enzyme_M_2"/>
    <property type="match status" value="1"/>
</dbReference>
<dbReference type="Pfam" id="PF02776">
    <property type="entry name" value="TPP_enzyme_N"/>
    <property type="match status" value="1"/>
</dbReference>
<dbReference type="PIRSF" id="PIRSF004983">
    <property type="entry name" value="MenD"/>
    <property type="match status" value="1"/>
</dbReference>
<dbReference type="SUPFAM" id="SSF52518">
    <property type="entry name" value="Thiamin diphosphate-binding fold (THDP-binding)"/>
    <property type="match status" value="2"/>
</dbReference>
<reference key="1">
    <citation type="submission" date="2008-06" db="EMBL/GenBank/DDBJ databases">
        <title>Genome and proteome analysis of A. pleuropneumoniae serotype 7.</title>
        <authorList>
            <person name="Linke B."/>
            <person name="Buettner F."/>
            <person name="Martinez-Arias R."/>
            <person name="Goesmann A."/>
            <person name="Baltes N."/>
            <person name="Tegetmeyer H."/>
            <person name="Singh M."/>
            <person name="Gerlach G.F."/>
        </authorList>
    </citation>
    <scope>NUCLEOTIDE SEQUENCE [LARGE SCALE GENOMIC DNA]</scope>
    <source>
        <strain>AP76</strain>
    </source>
</reference>
<comment type="function">
    <text evidence="1">Catalyzes the thiamine diphosphate-dependent decarboxylation of 2-oxoglutarate and the subsequent addition of the resulting succinic semialdehyde-thiamine pyrophosphate anion to isochorismate to yield 2-succinyl-5-enolpyruvyl-6-hydroxy-3-cyclohexene-1-carboxylate (SEPHCHC).</text>
</comment>
<comment type="catalytic activity">
    <reaction evidence="1">
        <text>isochorismate + 2-oxoglutarate + H(+) = 5-enolpyruvoyl-6-hydroxy-2-succinyl-cyclohex-3-ene-1-carboxylate + CO2</text>
        <dbReference type="Rhea" id="RHEA:25593"/>
        <dbReference type="ChEBI" id="CHEBI:15378"/>
        <dbReference type="ChEBI" id="CHEBI:16526"/>
        <dbReference type="ChEBI" id="CHEBI:16810"/>
        <dbReference type="ChEBI" id="CHEBI:29780"/>
        <dbReference type="ChEBI" id="CHEBI:58818"/>
        <dbReference type="EC" id="2.2.1.9"/>
    </reaction>
</comment>
<comment type="cofactor">
    <cofactor evidence="1">
        <name>Mg(2+)</name>
        <dbReference type="ChEBI" id="CHEBI:18420"/>
    </cofactor>
    <cofactor evidence="1">
        <name>Mn(2+)</name>
        <dbReference type="ChEBI" id="CHEBI:29035"/>
    </cofactor>
</comment>
<comment type="cofactor">
    <cofactor evidence="1">
        <name>thiamine diphosphate</name>
        <dbReference type="ChEBI" id="CHEBI:58937"/>
    </cofactor>
    <text evidence="1">Binds 1 thiamine pyrophosphate per subunit.</text>
</comment>
<comment type="pathway">
    <text evidence="1">Quinol/quinone metabolism; 1,4-dihydroxy-2-naphthoate biosynthesis; 1,4-dihydroxy-2-naphthoate from chorismate: step 2/7.</text>
</comment>
<comment type="pathway">
    <text evidence="1">Quinol/quinone metabolism; menaquinone biosynthesis.</text>
</comment>
<comment type="subunit">
    <text evidence="1">Homodimer.</text>
</comment>
<comment type="similarity">
    <text evidence="1">Belongs to the TPP enzyme family. MenD subfamily.</text>
</comment>
<sequence length="568" mass="62610">MTVSTFNRTWAKVIVNALLRYGVKHFCIAPGSRSTPLTLEALQLQQNQQAQCHSHFDERGLGFFALGIAKVTNDPVAIIVTSGTAVANLYPAVIEASLTHHKLIVLSADRPPELIGCGANQAIPQQGIFADYPIAGVNLPKPAEHYNAGWLVATIEQACVTQSQQGGVIHINAPFAEPLYEADENAIGTHPWLKPIQSWLINPQTKWINSQTIQSEVSMHENWDYWRTKRGVIVVGKLPVEQGIGIKAWAETLGWCLITDVQSCVDANLPYADIWLSNNTVHQRLLQADIVIQFGGQIVSKRVNKFLEAFKGEFWQVDEYSDYLNPFAHHQTRFVAKAHHFLRVHPPLRQKPWLLEPLALSQFCAGFIEQQVGGSLNEASLAHHIEEVLATSGNLFIGNSLFVRLVDALCKLPEGYPVYTNRGASGIDGLIATMAGVAKGSGQPTVGVIGDISALHDLNSVSLLNKISHPCILFVINNSGGAIFDMLPVEAQAKEQFYRLSHNYEFAPIATMFGIEYIRPFTWADLKAKLKLAYGRKGVTIVEIKVNDQDGSNLYKSLVKQISQAEIA</sequence>
<organism>
    <name type="scientific">Actinobacillus pleuropneumoniae serotype 7 (strain AP76)</name>
    <dbReference type="NCBI Taxonomy" id="537457"/>
    <lineage>
        <taxon>Bacteria</taxon>
        <taxon>Pseudomonadati</taxon>
        <taxon>Pseudomonadota</taxon>
        <taxon>Gammaproteobacteria</taxon>
        <taxon>Pasteurellales</taxon>
        <taxon>Pasteurellaceae</taxon>
        <taxon>Actinobacillus</taxon>
    </lineage>
</organism>
<proteinExistence type="inferred from homology"/>